<evidence type="ECO:0000255" key="1">
    <source>
        <dbReference type="HAMAP-Rule" id="MF_00061"/>
    </source>
</evidence>
<reference key="1">
    <citation type="journal article" date="2009" name="PLoS Pathog.">
        <title>Genomic evidence for the evolution of Streptococcus equi: host restriction, increased virulence, and genetic exchange with human pathogens.</title>
        <authorList>
            <person name="Holden M.T.G."/>
            <person name="Heather Z."/>
            <person name="Paillot R."/>
            <person name="Steward K.F."/>
            <person name="Webb K."/>
            <person name="Ainslie F."/>
            <person name="Jourdan T."/>
            <person name="Bason N.C."/>
            <person name="Holroyd N.E."/>
            <person name="Mungall K."/>
            <person name="Quail M.A."/>
            <person name="Sanders M."/>
            <person name="Simmonds M."/>
            <person name="Willey D."/>
            <person name="Brooks K."/>
            <person name="Aanensen D.M."/>
            <person name="Spratt B.G."/>
            <person name="Jolley K.A."/>
            <person name="Maiden M.C.J."/>
            <person name="Kehoe M."/>
            <person name="Chanter N."/>
            <person name="Bentley S.D."/>
            <person name="Robinson C."/>
            <person name="Maskell D.J."/>
            <person name="Parkhill J."/>
            <person name="Waller A.S."/>
        </authorList>
    </citation>
    <scope>NUCLEOTIDE SEQUENCE [LARGE SCALE GENOMIC DNA]</scope>
    <source>
        <strain>H70</strain>
    </source>
</reference>
<accession>C0MED6</accession>
<organism>
    <name type="scientific">Streptococcus equi subsp. zooepidemicus (strain H70)</name>
    <dbReference type="NCBI Taxonomy" id="553483"/>
    <lineage>
        <taxon>Bacteria</taxon>
        <taxon>Bacillati</taxon>
        <taxon>Bacillota</taxon>
        <taxon>Bacilli</taxon>
        <taxon>Lactobacillales</taxon>
        <taxon>Streptococcaceae</taxon>
        <taxon>Streptococcus</taxon>
    </lineage>
</organism>
<name>ISPE_STRS7</name>
<feature type="chain" id="PRO_1000202386" description="Putative 4-diphosphocytidyl-2-C-methyl-D-erythritol kinase">
    <location>
        <begin position="1"/>
        <end position="283"/>
    </location>
</feature>
<feature type="active site" evidence="1">
    <location>
        <position position="11"/>
    </location>
</feature>
<feature type="active site" evidence="1">
    <location>
        <position position="137"/>
    </location>
</feature>
<feature type="binding site" evidence="1">
    <location>
        <begin position="95"/>
        <end position="105"/>
    </location>
    <ligand>
        <name>ATP</name>
        <dbReference type="ChEBI" id="CHEBI:30616"/>
    </ligand>
</feature>
<protein>
    <recommendedName>
        <fullName evidence="1">Putative 4-diphosphocytidyl-2-C-methyl-D-erythritol kinase</fullName>
        <shortName evidence="1">CMK</shortName>
        <ecNumber evidence="1">2.7.1.148</ecNumber>
    </recommendedName>
    <alternativeName>
        <fullName evidence="1">4-(cytidine-5'-diphospho)-2-C-methyl-D-erythritol kinase</fullName>
    </alternativeName>
</protein>
<comment type="function">
    <text evidence="1">Catalyzes the phosphorylation of the position 2 hydroxy group of 4-diphosphocytidyl-2C-methyl-D-erythritol.</text>
</comment>
<comment type="catalytic activity">
    <reaction evidence="1">
        <text>4-CDP-2-C-methyl-D-erythritol + ATP = 4-CDP-2-C-methyl-D-erythritol 2-phosphate + ADP + H(+)</text>
        <dbReference type="Rhea" id="RHEA:18437"/>
        <dbReference type="ChEBI" id="CHEBI:15378"/>
        <dbReference type="ChEBI" id="CHEBI:30616"/>
        <dbReference type="ChEBI" id="CHEBI:57823"/>
        <dbReference type="ChEBI" id="CHEBI:57919"/>
        <dbReference type="ChEBI" id="CHEBI:456216"/>
        <dbReference type="EC" id="2.7.1.148"/>
    </reaction>
</comment>
<comment type="similarity">
    <text evidence="1">Belongs to the GHMP kinase family. IspE subfamily.</text>
</comment>
<proteinExistence type="inferred from homology"/>
<gene>
    <name type="ordered locus">SZO_00860</name>
</gene>
<sequence length="283" mass="31123">MTAIIERAPAKINLGLDIQGKRPDGYHDLSMVLVSVDLCDYITVDHLEEDRILLTSNCPRLPINEHNDVYKAAYLLKERFQISTGVSIFLDKRVPVCAGMGGGSSDAAAAIRALNQLWQLKLSPRQMIDIGMQIGSDVPYCLFAGCAQVTGKGEVVKPINGRLSSWVVLVKPEFGISTRTIFWDIDCETISRVPIEDLVSAIEAGDYQRLLATMGNSLEDISIAKRPFIQKVKDKMLQSGADIALMTGSGPTVFALCQTEKQANRVVNSLKGFCKEVYKVRTL</sequence>
<dbReference type="EC" id="2.7.1.148" evidence="1"/>
<dbReference type="EMBL" id="FM204884">
    <property type="protein sequence ID" value="CAW97708.1"/>
    <property type="molecule type" value="Genomic_DNA"/>
</dbReference>
<dbReference type="SMR" id="C0MED6"/>
<dbReference type="KEGG" id="seq:SZO_00860"/>
<dbReference type="eggNOG" id="COG1947">
    <property type="taxonomic scope" value="Bacteria"/>
</dbReference>
<dbReference type="HOGENOM" id="CLU_053057_1_1_9"/>
<dbReference type="Proteomes" id="UP000001368">
    <property type="component" value="Chromosome"/>
</dbReference>
<dbReference type="GO" id="GO:0050515">
    <property type="term" value="F:4-(cytidine 5'-diphospho)-2-C-methyl-D-erythritol kinase activity"/>
    <property type="evidence" value="ECO:0007669"/>
    <property type="project" value="UniProtKB-UniRule"/>
</dbReference>
<dbReference type="GO" id="GO:0005524">
    <property type="term" value="F:ATP binding"/>
    <property type="evidence" value="ECO:0007669"/>
    <property type="project" value="UniProtKB-UniRule"/>
</dbReference>
<dbReference type="GO" id="GO:0016114">
    <property type="term" value="P:terpenoid biosynthetic process"/>
    <property type="evidence" value="ECO:0007669"/>
    <property type="project" value="InterPro"/>
</dbReference>
<dbReference type="Gene3D" id="3.30.230.10">
    <property type="match status" value="1"/>
</dbReference>
<dbReference type="Gene3D" id="3.30.70.890">
    <property type="entry name" value="GHMP kinase, C-terminal domain"/>
    <property type="match status" value="1"/>
</dbReference>
<dbReference type="HAMAP" id="MF_00061">
    <property type="entry name" value="IspE"/>
    <property type="match status" value="1"/>
</dbReference>
<dbReference type="InterPro" id="IPR013750">
    <property type="entry name" value="GHMP_kinase_C_dom"/>
</dbReference>
<dbReference type="InterPro" id="IPR036554">
    <property type="entry name" value="GHMP_kinase_C_sf"/>
</dbReference>
<dbReference type="InterPro" id="IPR006204">
    <property type="entry name" value="GHMP_kinase_N_dom"/>
</dbReference>
<dbReference type="InterPro" id="IPR004424">
    <property type="entry name" value="IspE"/>
</dbReference>
<dbReference type="InterPro" id="IPR020568">
    <property type="entry name" value="Ribosomal_Su5_D2-typ_SF"/>
</dbReference>
<dbReference type="InterPro" id="IPR014721">
    <property type="entry name" value="Ribsml_uS5_D2-typ_fold_subgr"/>
</dbReference>
<dbReference type="NCBIfam" id="TIGR00154">
    <property type="entry name" value="ispE"/>
    <property type="match status" value="1"/>
</dbReference>
<dbReference type="NCBIfam" id="NF011202">
    <property type="entry name" value="PRK14608.1"/>
    <property type="match status" value="1"/>
</dbReference>
<dbReference type="PANTHER" id="PTHR43527">
    <property type="entry name" value="4-DIPHOSPHOCYTIDYL-2-C-METHYL-D-ERYTHRITOL KINASE, CHLOROPLASTIC"/>
    <property type="match status" value="1"/>
</dbReference>
<dbReference type="PANTHER" id="PTHR43527:SF2">
    <property type="entry name" value="4-DIPHOSPHOCYTIDYL-2-C-METHYL-D-ERYTHRITOL KINASE, CHLOROPLASTIC"/>
    <property type="match status" value="1"/>
</dbReference>
<dbReference type="Pfam" id="PF08544">
    <property type="entry name" value="GHMP_kinases_C"/>
    <property type="match status" value="1"/>
</dbReference>
<dbReference type="Pfam" id="PF00288">
    <property type="entry name" value="GHMP_kinases_N"/>
    <property type="match status" value="1"/>
</dbReference>
<dbReference type="PIRSF" id="PIRSF010376">
    <property type="entry name" value="IspE"/>
    <property type="match status" value="1"/>
</dbReference>
<dbReference type="PRINTS" id="PR00958">
    <property type="entry name" value="HOMSERKINASE"/>
</dbReference>
<dbReference type="SUPFAM" id="SSF55060">
    <property type="entry name" value="GHMP Kinase, C-terminal domain"/>
    <property type="match status" value="1"/>
</dbReference>
<dbReference type="SUPFAM" id="SSF54211">
    <property type="entry name" value="Ribosomal protein S5 domain 2-like"/>
    <property type="match status" value="1"/>
</dbReference>
<keyword id="KW-0067">ATP-binding</keyword>
<keyword id="KW-0418">Kinase</keyword>
<keyword id="KW-0547">Nucleotide-binding</keyword>
<keyword id="KW-0808">Transferase</keyword>